<organism>
    <name type="scientific">Hapsidospora irregularis</name>
    <dbReference type="NCBI Taxonomy" id="95324"/>
    <lineage>
        <taxon>Eukaryota</taxon>
        <taxon>Fungi</taxon>
        <taxon>Dikarya</taxon>
        <taxon>Ascomycota</taxon>
        <taxon>Pezizomycotina</taxon>
        <taxon>Sordariomycetes</taxon>
        <taxon>Hypocreomycetidae</taxon>
        <taxon>Hypocreales</taxon>
        <taxon>Bionectriaceae</taxon>
        <taxon>Hapsidospora</taxon>
    </lineage>
</organism>
<keyword id="KW-0223">Dioxygenase</keyword>
<keyword id="KW-0479">Metal-binding</keyword>
<keyword id="KW-0560">Oxidoreductase</keyword>
<keyword id="KW-0732">Signal</keyword>
<keyword id="KW-0862">Zinc</keyword>
<name>TASH_HAPIR</name>
<feature type="signal peptide" evidence="2">
    <location>
        <begin position="1"/>
        <end position="25"/>
    </location>
</feature>
<feature type="chain" id="PRO_5012994845" description="Dioxygenase tasH" evidence="2">
    <location>
        <begin position="26"/>
        <end position="324"/>
    </location>
</feature>
<feature type="binding site" evidence="1">
    <location>
        <position position="50"/>
    </location>
    <ligand>
        <name>Zn(2+)</name>
        <dbReference type="ChEBI" id="CHEBI:29105"/>
    </ligand>
</feature>
<feature type="binding site" evidence="1">
    <location>
        <position position="96"/>
    </location>
    <ligand>
        <name>Zn(2+)</name>
        <dbReference type="ChEBI" id="CHEBI:29105"/>
    </ligand>
</feature>
<feature type="binding site" evidence="1">
    <location>
        <position position="284"/>
    </location>
    <ligand>
        <name>Zn(2+)</name>
        <dbReference type="ChEBI" id="CHEBI:29105"/>
    </ligand>
</feature>
<sequence>MRSMSLWMLIGPVTGIATWASLRYAATTTTSSTAAASTRMGLAPVIALSHGGGPLPLLGDPGHKSIIHSLSHRIPKILSLNDPDRRPRAIILITAHWSTAAPTISGAANPDLIYDYYGFPPETYELKYPARGDPGIAAEAAAAFRAEGLGDVVVDPGRGWDHGVFVPMTLVRPEADIPIVQMSVLASEDPTSHLRMGRALRALRAENIAIVGSGFASFHNLRAMMAMRSSAGSRNPEGARIQAISREWNSALTDVVDKNPWQGLEGWRSLPGADLMHPPRGGEHFMPLIACAGAAHEEEKVRWYTDEYLGVDIYTYYWGGSDVE</sequence>
<accession>A0A0F7CUE8</accession>
<protein>
    <recommendedName>
        <fullName evidence="4">Dioxygenase tasH</fullName>
        <ecNumber evidence="6">1.-.-.-</ecNumber>
    </recommendedName>
    <alternativeName>
        <fullName evidence="4">Tetramic acid Sch210971/2 biosynthesis cluster protein H</fullName>
    </alternativeName>
</protein>
<comment type="function">
    <text evidence="3">Dioxygenase; part of the gene cluster that mediates the biosynthesis of the tetramic acids Sch210971 and Sch210972, potential anti-HIV fungal natural product that contain a decalin core (PubMed:25885659). The PKS module of tasS together with the enoylreductase tasC catalyze the formation of the polyketide unit which is then conjugated to 4-hydroxyl-4-methyl glutamate (HMG) by the condensation domain of the tasS NRPS module (PubMed:25885659). One unique structural feature of Sch210971 and Sch210972 is the tetramic acid motif proposed to be derived from the non-proteinogenic amino acid HMG, by a Dieckmann-type condensation catalyzed by the reductase domain of tasS (PubMed:25885659). The aldolase tasA catalyzes the aldol condensation of 2 molecules of pyruvic acid to yield the intermediate 4-hydroxyl-4-methyl-2-oxoglutarate (HMOG), which can then be stereoselectively transaminated, may be by tasG, to form HMG (PubMed:25885659). The Diels-Alderase tas3 then uses the Dieckmann product of tasS as substrate and catalyzes the Diels-Alder cycloaddition to form the decalin ring of Sch210971 and Sch210972 (PubMed:25885659).</text>
</comment>
<comment type="cofactor">
    <cofactor evidence="1">
        <name>Zn(2+)</name>
        <dbReference type="ChEBI" id="CHEBI:29105"/>
    </cofactor>
    <text evidence="1">Binds 1 zinc ion per subunit.</text>
</comment>
<comment type="subunit">
    <text evidence="1">Monomer.</text>
</comment>
<comment type="similarity">
    <text evidence="5">Belongs to the DODA-type extradiol aromatic ring-opening dioxygenase family.</text>
</comment>
<proteinExistence type="evidence at protein level"/>
<reference key="1">
    <citation type="journal article" date="2015" name="Org. Lett.">
        <title>Biosynthesis of the tetramic acids Sch210971 and Sch210972.</title>
        <authorList>
            <person name="Kakule T.B."/>
            <person name="Zhang S."/>
            <person name="Zhan J."/>
            <person name="Schmidt E.W."/>
        </authorList>
    </citation>
    <scope>NUCLEOTIDE SEQUENCE [GENOMIC DNA]</scope>
    <scope>FUNCTION</scope>
    <scope>CATALYTIC ACTIVITY</scope>
    <scope>PATHWAY</scope>
</reference>
<dbReference type="EC" id="1.-.-.-" evidence="6"/>
<dbReference type="EMBL" id="KP835202">
    <property type="protein sequence ID" value="AKG54857.1"/>
    <property type="molecule type" value="Genomic_DNA"/>
</dbReference>
<dbReference type="SMR" id="A0A0F7CUE8"/>
<dbReference type="GO" id="GO:0008198">
    <property type="term" value="F:ferrous iron binding"/>
    <property type="evidence" value="ECO:0007669"/>
    <property type="project" value="InterPro"/>
</dbReference>
<dbReference type="GO" id="GO:0016702">
    <property type="term" value="F:oxidoreductase activity, acting on single donors with incorporation of molecular oxygen, incorporation of two atoms of oxygen"/>
    <property type="evidence" value="ECO:0007669"/>
    <property type="project" value="UniProtKB-ARBA"/>
</dbReference>
<dbReference type="GO" id="GO:0008270">
    <property type="term" value="F:zinc ion binding"/>
    <property type="evidence" value="ECO:0007669"/>
    <property type="project" value="InterPro"/>
</dbReference>
<dbReference type="CDD" id="cd07363">
    <property type="entry name" value="45_DOPA_Dioxygenase"/>
    <property type="match status" value="1"/>
</dbReference>
<dbReference type="Gene3D" id="3.40.830.10">
    <property type="entry name" value="LigB-like"/>
    <property type="match status" value="1"/>
</dbReference>
<dbReference type="InterPro" id="IPR014436">
    <property type="entry name" value="Extradiol_dOase_DODA"/>
</dbReference>
<dbReference type="InterPro" id="IPR004183">
    <property type="entry name" value="Xdiol_dOase_suB"/>
</dbReference>
<dbReference type="PANTHER" id="PTHR30096">
    <property type="entry name" value="4,5-DOPA DIOXYGENASE EXTRADIOL-LIKE PROTEIN"/>
    <property type="match status" value="1"/>
</dbReference>
<dbReference type="PANTHER" id="PTHR30096:SF0">
    <property type="entry name" value="4,5-DOPA DIOXYGENASE EXTRADIOL-LIKE PROTEIN"/>
    <property type="match status" value="1"/>
</dbReference>
<dbReference type="Pfam" id="PF02900">
    <property type="entry name" value="LigB"/>
    <property type="match status" value="1"/>
</dbReference>
<dbReference type="PIRSF" id="PIRSF006157">
    <property type="entry name" value="Doxgns_DODA"/>
    <property type="match status" value="1"/>
</dbReference>
<dbReference type="SUPFAM" id="SSF53213">
    <property type="entry name" value="LigB-like"/>
    <property type="match status" value="1"/>
</dbReference>
<gene>
    <name evidence="4" type="primary">tasH</name>
</gene>
<evidence type="ECO:0000250" key="1">
    <source>
        <dbReference type="UniProtKB" id="P24197"/>
    </source>
</evidence>
<evidence type="ECO:0000255" key="2"/>
<evidence type="ECO:0000269" key="3">
    <source>
    </source>
</evidence>
<evidence type="ECO:0000303" key="4">
    <source>
    </source>
</evidence>
<evidence type="ECO:0000305" key="5"/>
<evidence type="ECO:0000305" key="6">
    <source>
    </source>
</evidence>